<protein>
    <recommendedName>
        <fullName evidence="1">Translational regulator CsrA</fullName>
    </recommendedName>
</protein>
<proteinExistence type="inferred from homology"/>
<feature type="chain" id="PRO_0000177074" description="Translational regulator CsrA">
    <location>
        <begin position="1"/>
        <end position="84"/>
    </location>
</feature>
<evidence type="ECO:0000255" key="1">
    <source>
        <dbReference type="HAMAP-Rule" id="MF_00167"/>
    </source>
</evidence>
<sequence>MLVLARRTNESIMIGDDIEIVIVDIKGDQVKIGVKAPRDVSVHRAEVYKDIQEENKKAAETKIKPADLGKIGNILKKKDSGKKE</sequence>
<dbReference type="EMBL" id="AE010300">
    <property type="protein sequence ID" value="AAN51504.1"/>
    <property type="molecule type" value="Genomic_DNA"/>
</dbReference>
<dbReference type="RefSeq" id="NP_714486.1">
    <property type="nucleotide sequence ID" value="NC_004342.2"/>
</dbReference>
<dbReference type="RefSeq" id="WP_000960595.1">
    <property type="nucleotide sequence ID" value="NC_004342.2"/>
</dbReference>
<dbReference type="SMR" id="Q8EYB0"/>
<dbReference type="FunCoup" id="Q8EYB0">
    <property type="interactions" value="186"/>
</dbReference>
<dbReference type="STRING" id="189518.LA_4306"/>
<dbReference type="PaxDb" id="189518-LA_4306"/>
<dbReference type="EnsemblBacteria" id="AAN51504">
    <property type="protein sequence ID" value="AAN51504"/>
    <property type="gene ID" value="LA_4306"/>
</dbReference>
<dbReference type="GeneID" id="61143310"/>
<dbReference type="KEGG" id="lil:LA_4306"/>
<dbReference type="PATRIC" id="fig|189518.3.peg.4275"/>
<dbReference type="HOGENOM" id="CLU_164837_0_0_12"/>
<dbReference type="InParanoid" id="Q8EYB0"/>
<dbReference type="OrthoDB" id="9809061at2"/>
<dbReference type="PRO" id="PR:Q8EYB0"/>
<dbReference type="Proteomes" id="UP000001408">
    <property type="component" value="Chromosome I"/>
</dbReference>
<dbReference type="GO" id="GO:0005829">
    <property type="term" value="C:cytosol"/>
    <property type="evidence" value="ECO:0000318"/>
    <property type="project" value="GO_Central"/>
</dbReference>
<dbReference type="GO" id="GO:0048027">
    <property type="term" value="F:mRNA 5'-UTR binding"/>
    <property type="evidence" value="ECO:0007669"/>
    <property type="project" value="UniProtKB-UniRule"/>
</dbReference>
<dbReference type="GO" id="GO:0044781">
    <property type="term" value="P:bacterial-type flagellum organization"/>
    <property type="evidence" value="ECO:0007669"/>
    <property type="project" value="UniProtKB-KW"/>
</dbReference>
<dbReference type="GO" id="GO:0006402">
    <property type="term" value="P:mRNA catabolic process"/>
    <property type="evidence" value="ECO:0007669"/>
    <property type="project" value="InterPro"/>
</dbReference>
<dbReference type="GO" id="GO:0045947">
    <property type="term" value="P:negative regulation of translational initiation"/>
    <property type="evidence" value="ECO:0007669"/>
    <property type="project" value="UniProtKB-UniRule"/>
</dbReference>
<dbReference type="GO" id="GO:1902208">
    <property type="term" value="P:regulation of bacterial-type flagellum assembly"/>
    <property type="evidence" value="ECO:0007669"/>
    <property type="project" value="UniProtKB-UniRule"/>
</dbReference>
<dbReference type="GO" id="GO:0006109">
    <property type="term" value="P:regulation of carbohydrate metabolic process"/>
    <property type="evidence" value="ECO:0007669"/>
    <property type="project" value="InterPro"/>
</dbReference>
<dbReference type="FunFam" id="2.60.40.4380:FF:000002">
    <property type="entry name" value="Translational regulator CsrA"/>
    <property type="match status" value="1"/>
</dbReference>
<dbReference type="Gene3D" id="2.60.40.4380">
    <property type="entry name" value="Translational regulator CsrA"/>
    <property type="match status" value="1"/>
</dbReference>
<dbReference type="HAMAP" id="MF_00167">
    <property type="entry name" value="CsrA"/>
    <property type="match status" value="1"/>
</dbReference>
<dbReference type="InterPro" id="IPR003751">
    <property type="entry name" value="CsrA"/>
</dbReference>
<dbReference type="InterPro" id="IPR036107">
    <property type="entry name" value="CsrA_sf"/>
</dbReference>
<dbReference type="NCBIfam" id="TIGR00202">
    <property type="entry name" value="csrA"/>
    <property type="match status" value="1"/>
</dbReference>
<dbReference type="NCBIfam" id="NF002469">
    <property type="entry name" value="PRK01712.1"/>
    <property type="match status" value="1"/>
</dbReference>
<dbReference type="PANTHER" id="PTHR34984">
    <property type="entry name" value="CARBON STORAGE REGULATOR"/>
    <property type="match status" value="1"/>
</dbReference>
<dbReference type="PANTHER" id="PTHR34984:SF1">
    <property type="entry name" value="CARBON STORAGE REGULATOR"/>
    <property type="match status" value="1"/>
</dbReference>
<dbReference type="Pfam" id="PF02599">
    <property type="entry name" value="CsrA"/>
    <property type="match status" value="1"/>
</dbReference>
<dbReference type="SUPFAM" id="SSF117130">
    <property type="entry name" value="CsrA-like"/>
    <property type="match status" value="1"/>
</dbReference>
<reference key="1">
    <citation type="journal article" date="2003" name="Nature">
        <title>Unique physiological and pathogenic features of Leptospira interrogans revealed by whole-genome sequencing.</title>
        <authorList>
            <person name="Ren S.-X."/>
            <person name="Fu G."/>
            <person name="Jiang X.-G."/>
            <person name="Zeng R."/>
            <person name="Miao Y.-G."/>
            <person name="Xu H."/>
            <person name="Zhang Y.-X."/>
            <person name="Xiong H."/>
            <person name="Lu G."/>
            <person name="Lu L.-F."/>
            <person name="Jiang H.-Q."/>
            <person name="Jia J."/>
            <person name="Tu Y.-F."/>
            <person name="Jiang J.-X."/>
            <person name="Gu W.-Y."/>
            <person name="Zhang Y.-Q."/>
            <person name="Cai Z."/>
            <person name="Sheng H.-H."/>
            <person name="Yin H.-F."/>
            <person name="Zhang Y."/>
            <person name="Zhu G.-F."/>
            <person name="Wan M."/>
            <person name="Huang H.-L."/>
            <person name="Qian Z."/>
            <person name="Wang S.-Y."/>
            <person name="Ma W."/>
            <person name="Yao Z.-J."/>
            <person name="Shen Y."/>
            <person name="Qiang B.-Q."/>
            <person name="Xia Q.-C."/>
            <person name="Guo X.-K."/>
            <person name="Danchin A."/>
            <person name="Saint Girons I."/>
            <person name="Somerville R.L."/>
            <person name="Wen Y.-M."/>
            <person name="Shi M.-H."/>
            <person name="Chen Z."/>
            <person name="Xu J.-G."/>
            <person name="Zhao G.-P."/>
        </authorList>
    </citation>
    <scope>NUCLEOTIDE SEQUENCE [LARGE SCALE GENOMIC DNA]</scope>
    <source>
        <strain>56601</strain>
    </source>
</reference>
<accession>Q8EYB0</accession>
<keyword id="KW-1005">Bacterial flagellum biogenesis</keyword>
<keyword id="KW-0963">Cytoplasm</keyword>
<keyword id="KW-1185">Reference proteome</keyword>
<keyword id="KW-0678">Repressor</keyword>
<keyword id="KW-0694">RNA-binding</keyword>
<keyword id="KW-0810">Translation regulation</keyword>
<gene>
    <name evidence="1" type="primary">csrA</name>
    <name type="ordered locus">LA_4306</name>
</gene>
<name>CSRA_LEPIN</name>
<comment type="function">
    <text evidence="1">A translational regulator that binds mRNA to regulate translation initiation and/or mRNA stability. Usually binds in the 5'-UTR at or near the Shine-Dalgarno sequence preventing ribosome-binding, thus repressing translation. Its main target seems to be the major flagellin gene, while its function is anatagonized by FliW.</text>
</comment>
<comment type="subunit">
    <text evidence="1">Homodimer; the beta-strands of each monomer intercalate to form a hydrophobic core, while the alpha-helices form wings that extend away from the core.</text>
</comment>
<comment type="subcellular location">
    <subcellularLocation>
        <location evidence="1">Cytoplasm</location>
    </subcellularLocation>
</comment>
<comment type="similarity">
    <text evidence="1">Belongs to the CsrA/RsmA family.</text>
</comment>
<organism>
    <name type="scientific">Leptospira interrogans serogroup Icterohaemorrhagiae serovar Lai (strain 56601)</name>
    <dbReference type="NCBI Taxonomy" id="189518"/>
    <lineage>
        <taxon>Bacteria</taxon>
        <taxon>Pseudomonadati</taxon>
        <taxon>Spirochaetota</taxon>
        <taxon>Spirochaetia</taxon>
        <taxon>Leptospirales</taxon>
        <taxon>Leptospiraceae</taxon>
        <taxon>Leptospira</taxon>
    </lineage>
</organism>